<keyword id="KW-0997">Cell inner membrane</keyword>
<keyword id="KW-1003">Cell membrane</keyword>
<keyword id="KW-0472">Membrane</keyword>
<keyword id="KW-0812">Transmembrane</keyword>
<keyword id="KW-1133">Transmembrane helix</keyword>
<reference key="1">
    <citation type="journal article" date="2006" name="Proc. Natl. Acad. Sci. U.S.A.">
        <title>Identification of genes subject to positive selection in uropathogenic strains of Escherichia coli: a comparative genomics approach.</title>
        <authorList>
            <person name="Chen S.L."/>
            <person name="Hung C.-S."/>
            <person name="Xu J."/>
            <person name="Reigstad C.S."/>
            <person name="Magrini V."/>
            <person name="Sabo A."/>
            <person name="Blasiar D."/>
            <person name="Bieri T."/>
            <person name="Meyer R.R."/>
            <person name="Ozersky P."/>
            <person name="Armstrong J.R."/>
            <person name="Fulton R.S."/>
            <person name="Latreille J.P."/>
            <person name="Spieth J."/>
            <person name="Hooton T.M."/>
            <person name="Mardis E.R."/>
            <person name="Hultgren S.J."/>
            <person name="Gordon J.I."/>
        </authorList>
    </citation>
    <scope>NUCLEOTIDE SEQUENCE [LARGE SCALE GENOMIC DNA]</scope>
    <source>
        <strain>UTI89 / UPEC</strain>
    </source>
</reference>
<protein>
    <recommendedName>
        <fullName evidence="1">PhoP/PhoQ regulator MgrB</fullName>
    </recommendedName>
</protein>
<proteinExistence type="inferred from homology"/>
<organism>
    <name type="scientific">Escherichia coli (strain UTI89 / UPEC)</name>
    <dbReference type="NCBI Taxonomy" id="364106"/>
    <lineage>
        <taxon>Bacteria</taxon>
        <taxon>Pseudomonadati</taxon>
        <taxon>Pseudomonadota</taxon>
        <taxon>Gammaproteobacteria</taxon>
        <taxon>Enterobacterales</taxon>
        <taxon>Enterobacteriaceae</taxon>
        <taxon>Escherichia</taxon>
    </lineage>
</organism>
<accession>Q1RAW2</accession>
<name>MGRB_ECOUT</name>
<comment type="function">
    <text evidence="1">PhoP-regulated transcription is redox-sensitive, being activated when the periplasm becomes more reducing. MgrB acts between DsbA/DsbB and PhoP/PhoQ in this pathway. Represses PhoP/PhoQ signaling, possibly by binding to the periplasmic domain of PhoQ, altering its activity and that of downstream effector PhoP.</text>
</comment>
<comment type="subunit">
    <text evidence="1">May form homooligomers. Probably interacts with the periplasmic domain of PhoQ.</text>
</comment>
<comment type="subcellular location">
    <subcellularLocation>
        <location evidence="1">Cell inner membrane</location>
        <topology evidence="1">Single-pass membrane protein</topology>
    </subcellularLocation>
</comment>
<comment type="similarity">
    <text evidence="1">Belongs to the MgrB family.</text>
</comment>
<feature type="chain" id="PRO_0000330669" description="PhoP/PhoQ regulator MgrB">
    <location>
        <begin position="1"/>
        <end position="47"/>
    </location>
</feature>
<feature type="transmembrane region" description="Helical" evidence="1">
    <location>
        <begin position="6"/>
        <end position="26"/>
    </location>
</feature>
<dbReference type="EMBL" id="CP000243">
    <property type="protein sequence ID" value="ABE07502.1"/>
    <property type="molecule type" value="Genomic_DNA"/>
</dbReference>
<dbReference type="RefSeq" id="WP_000714545.1">
    <property type="nucleotide sequence ID" value="NZ_CP064825.1"/>
</dbReference>
<dbReference type="KEGG" id="eci:UTI89_C2026"/>
<dbReference type="HOGENOM" id="CLU_208030_1_0_6"/>
<dbReference type="Proteomes" id="UP000001952">
    <property type="component" value="Chromosome"/>
</dbReference>
<dbReference type="GO" id="GO:0005886">
    <property type="term" value="C:plasma membrane"/>
    <property type="evidence" value="ECO:0007669"/>
    <property type="project" value="UniProtKB-SubCell"/>
</dbReference>
<dbReference type="GO" id="GO:0070298">
    <property type="term" value="P:negative regulation of phosphorelay signal transduction system"/>
    <property type="evidence" value="ECO:0007669"/>
    <property type="project" value="UniProtKB-UniRule"/>
</dbReference>
<dbReference type="HAMAP" id="MF_01596">
    <property type="entry name" value="MgrB"/>
    <property type="match status" value="1"/>
</dbReference>
<dbReference type="InterPro" id="IPR020907">
    <property type="entry name" value="MgrB"/>
</dbReference>
<dbReference type="NCBIfam" id="NF007635">
    <property type="entry name" value="PRK10299.1"/>
    <property type="match status" value="1"/>
</dbReference>
<dbReference type="Pfam" id="PF13998">
    <property type="entry name" value="MgrB"/>
    <property type="match status" value="1"/>
</dbReference>
<dbReference type="PROSITE" id="PS51257">
    <property type="entry name" value="PROKAR_LIPOPROTEIN"/>
    <property type="match status" value="1"/>
</dbReference>
<gene>
    <name evidence="1" type="primary">mgrB</name>
    <name type="ordered locus">UTI89_C2026</name>
</gene>
<sequence>MKKFRWVALVVVVLACLLLWAQVFNMMCDQDVQFFSGICALNQFIPW</sequence>
<evidence type="ECO:0000255" key="1">
    <source>
        <dbReference type="HAMAP-Rule" id="MF_01596"/>
    </source>
</evidence>